<comment type="function">
    <text evidence="1">O-methyltransferase that catalyzes the 2 O-methylation steps in the ubiquinone biosynthetic pathway.</text>
</comment>
<comment type="catalytic activity">
    <reaction evidence="1">
        <text>a 3-demethylubiquinol + S-adenosyl-L-methionine = a ubiquinol + S-adenosyl-L-homocysteine + H(+)</text>
        <dbReference type="Rhea" id="RHEA:44380"/>
        <dbReference type="Rhea" id="RHEA-COMP:9566"/>
        <dbReference type="Rhea" id="RHEA-COMP:10914"/>
        <dbReference type="ChEBI" id="CHEBI:15378"/>
        <dbReference type="ChEBI" id="CHEBI:17976"/>
        <dbReference type="ChEBI" id="CHEBI:57856"/>
        <dbReference type="ChEBI" id="CHEBI:59789"/>
        <dbReference type="ChEBI" id="CHEBI:84422"/>
        <dbReference type="EC" id="2.1.1.64"/>
    </reaction>
</comment>
<comment type="catalytic activity">
    <reaction evidence="1">
        <text>a 3-(all-trans-polyprenyl)benzene-1,2-diol + S-adenosyl-L-methionine = a 2-methoxy-6-(all-trans-polyprenyl)phenol + S-adenosyl-L-homocysteine + H(+)</text>
        <dbReference type="Rhea" id="RHEA:31411"/>
        <dbReference type="Rhea" id="RHEA-COMP:9550"/>
        <dbReference type="Rhea" id="RHEA-COMP:9551"/>
        <dbReference type="ChEBI" id="CHEBI:15378"/>
        <dbReference type="ChEBI" id="CHEBI:57856"/>
        <dbReference type="ChEBI" id="CHEBI:59789"/>
        <dbReference type="ChEBI" id="CHEBI:62729"/>
        <dbReference type="ChEBI" id="CHEBI:62731"/>
        <dbReference type="EC" id="2.1.1.222"/>
    </reaction>
</comment>
<comment type="pathway">
    <text evidence="1">Cofactor biosynthesis; ubiquinone biosynthesis.</text>
</comment>
<comment type="similarity">
    <text evidence="1">Belongs to the methyltransferase superfamily. UbiG/COQ3 family.</text>
</comment>
<sequence length="253" mass="27724">MADRADKAARSSVDPGEIARFSAMAAEWWDPAGKFRPLHKFNPTRLSYIRERTSAHFGLDARAVRPFEDLRFLDIGCGGGLLSEPMARLGAAMVSADASEQNIKTASVHAAEQGLGIDYRCTTAEALAAAGETFDVILNMEVIEHVADPMAFLKDCASMLRPGGLMFIATLNRTLKAHAFAIVGAEYVLGWLPRGTHDWKKFITVNEMETGIADAGLRLKELTGVSYNPLTDKWSLSRDTDVNYMALAERARD</sequence>
<evidence type="ECO:0000255" key="1">
    <source>
        <dbReference type="HAMAP-Rule" id="MF_00472"/>
    </source>
</evidence>
<keyword id="KW-0489">Methyltransferase</keyword>
<keyword id="KW-1185">Reference proteome</keyword>
<keyword id="KW-0949">S-adenosyl-L-methionine</keyword>
<keyword id="KW-0808">Transferase</keyword>
<keyword id="KW-0831">Ubiquinone biosynthesis</keyword>
<reference key="1">
    <citation type="journal article" date="2011" name="Stand. Genomic Sci.">
        <title>Complete genome sequence of Parvibaculum lavamentivorans type strain (DS-1(T)).</title>
        <authorList>
            <person name="Schleheck D."/>
            <person name="Weiss M."/>
            <person name="Pitluck S."/>
            <person name="Bruce D."/>
            <person name="Land M.L."/>
            <person name="Han S."/>
            <person name="Saunders E."/>
            <person name="Tapia R."/>
            <person name="Detter C."/>
            <person name="Brettin T."/>
            <person name="Han J."/>
            <person name="Woyke T."/>
            <person name="Goodwin L."/>
            <person name="Pennacchio L."/>
            <person name="Nolan M."/>
            <person name="Cook A.M."/>
            <person name="Kjelleberg S."/>
            <person name="Thomas T."/>
        </authorList>
    </citation>
    <scope>NUCLEOTIDE SEQUENCE [LARGE SCALE GENOMIC DNA]</scope>
    <source>
        <strain>DS-1 / DSM 13023 / NCIMB 13966</strain>
    </source>
</reference>
<organism>
    <name type="scientific">Parvibaculum lavamentivorans (strain DS-1 / DSM 13023 / NCIMB 13966)</name>
    <dbReference type="NCBI Taxonomy" id="402881"/>
    <lineage>
        <taxon>Bacteria</taxon>
        <taxon>Pseudomonadati</taxon>
        <taxon>Pseudomonadota</taxon>
        <taxon>Alphaproteobacteria</taxon>
        <taxon>Hyphomicrobiales</taxon>
        <taxon>Parvibaculaceae</taxon>
        <taxon>Parvibaculum</taxon>
    </lineage>
</organism>
<feature type="chain" id="PRO_1000072394" description="Ubiquinone biosynthesis O-methyltransferase">
    <location>
        <begin position="1"/>
        <end position="253"/>
    </location>
</feature>
<feature type="binding site" evidence="1">
    <location>
        <position position="45"/>
    </location>
    <ligand>
        <name>S-adenosyl-L-methionine</name>
        <dbReference type="ChEBI" id="CHEBI:59789"/>
    </ligand>
</feature>
<feature type="binding site" evidence="1">
    <location>
        <position position="76"/>
    </location>
    <ligand>
        <name>S-adenosyl-L-methionine</name>
        <dbReference type="ChEBI" id="CHEBI:59789"/>
    </ligand>
</feature>
<feature type="binding site" evidence="1">
    <location>
        <position position="97"/>
    </location>
    <ligand>
        <name>S-adenosyl-L-methionine</name>
        <dbReference type="ChEBI" id="CHEBI:59789"/>
    </ligand>
</feature>
<feature type="binding site" evidence="1">
    <location>
        <position position="140"/>
    </location>
    <ligand>
        <name>S-adenosyl-L-methionine</name>
        <dbReference type="ChEBI" id="CHEBI:59789"/>
    </ligand>
</feature>
<dbReference type="EC" id="2.1.1.222" evidence="1"/>
<dbReference type="EC" id="2.1.1.64" evidence="1"/>
<dbReference type="EMBL" id="CP000774">
    <property type="protein sequence ID" value="ABS63361.1"/>
    <property type="molecule type" value="Genomic_DNA"/>
</dbReference>
<dbReference type="RefSeq" id="WP_012110654.1">
    <property type="nucleotide sequence ID" value="NC_009719.1"/>
</dbReference>
<dbReference type="SMR" id="A7HTX8"/>
<dbReference type="STRING" id="402881.Plav_1742"/>
<dbReference type="KEGG" id="pla:Plav_1742"/>
<dbReference type="eggNOG" id="COG2227">
    <property type="taxonomic scope" value="Bacteria"/>
</dbReference>
<dbReference type="HOGENOM" id="CLU_042432_0_0_5"/>
<dbReference type="OrthoDB" id="9801538at2"/>
<dbReference type="UniPathway" id="UPA00232"/>
<dbReference type="Proteomes" id="UP000006377">
    <property type="component" value="Chromosome"/>
</dbReference>
<dbReference type="GO" id="GO:0102208">
    <property type="term" value="F:2-polyprenyl-6-hydroxyphenol methylase activity"/>
    <property type="evidence" value="ECO:0007669"/>
    <property type="project" value="UniProtKB-EC"/>
</dbReference>
<dbReference type="GO" id="GO:0061542">
    <property type="term" value="F:3-demethylubiquinol 3-O-methyltransferase activity"/>
    <property type="evidence" value="ECO:0007669"/>
    <property type="project" value="UniProtKB-UniRule"/>
</dbReference>
<dbReference type="GO" id="GO:0010420">
    <property type="term" value="F:polyprenyldihydroxybenzoate methyltransferase activity"/>
    <property type="evidence" value="ECO:0007669"/>
    <property type="project" value="InterPro"/>
</dbReference>
<dbReference type="GO" id="GO:0032259">
    <property type="term" value="P:methylation"/>
    <property type="evidence" value="ECO:0007669"/>
    <property type="project" value="UniProtKB-KW"/>
</dbReference>
<dbReference type="CDD" id="cd02440">
    <property type="entry name" value="AdoMet_MTases"/>
    <property type="match status" value="1"/>
</dbReference>
<dbReference type="Gene3D" id="3.40.50.150">
    <property type="entry name" value="Vaccinia Virus protein VP39"/>
    <property type="match status" value="1"/>
</dbReference>
<dbReference type="HAMAP" id="MF_00472">
    <property type="entry name" value="UbiG"/>
    <property type="match status" value="1"/>
</dbReference>
<dbReference type="InterPro" id="IPR013216">
    <property type="entry name" value="Methyltransf_11"/>
</dbReference>
<dbReference type="InterPro" id="IPR029063">
    <property type="entry name" value="SAM-dependent_MTases_sf"/>
</dbReference>
<dbReference type="InterPro" id="IPR010233">
    <property type="entry name" value="UbiG_MeTrfase"/>
</dbReference>
<dbReference type="NCBIfam" id="TIGR01983">
    <property type="entry name" value="UbiG"/>
    <property type="match status" value="1"/>
</dbReference>
<dbReference type="PANTHER" id="PTHR43464">
    <property type="entry name" value="METHYLTRANSFERASE"/>
    <property type="match status" value="1"/>
</dbReference>
<dbReference type="PANTHER" id="PTHR43464:SF19">
    <property type="entry name" value="UBIQUINONE BIOSYNTHESIS O-METHYLTRANSFERASE, MITOCHONDRIAL"/>
    <property type="match status" value="1"/>
</dbReference>
<dbReference type="Pfam" id="PF08241">
    <property type="entry name" value="Methyltransf_11"/>
    <property type="match status" value="1"/>
</dbReference>
<dbReference type="SUPFAM" id="SSF53335">
    <property type="entry name" value="S-adenosyl-L-methionine-dependent methyltransferases"/>
    <property type="match status" value="1"/>
</dbReference>
<accession>A7HTX8</accession>
<name>UBIG_PARL1</name>
<proteinExistence type="inferred from homology"/>
<protein>
    <recommendedName>
        <fullName evidence="1">Ubiquinone biosynthesis O-methyltransferase</fullName>
    </recommendedName>
    <alternativeName>
        <fullName evidence="1">2-polyprenyl-6-hydroxyphenol methylase</fullName>
        <ecNumber evidence="1">2.1.1.222</ecNumber>
    </alternativeName>
    <alternativeName>
        <fullName evidence="1">3-demethylubiquinone 3-O-methyltransferase</fullName>
        <ecNumber evidence="1">2.1.1.64</ecNumber>
    </alternativeName>
</protein>
<gene>
    <name evidence="1" type="primary">ubiG</name>
    <name type="ordered locus">Plav_1742</name>
</gene>